<gene>
    <name evidence="1" type="primary">ruvC</name>
    <name type="ordered locus">Ppro_2672</name>
</gene>
<comment type="function">
    <text evidence="1">The RuvA-RuvB-RuvC complex processes Holliday junction (HJ) DNA during genetic recombination and DNA repair. Endonuclease that resolves HJ intermediates. Cleaves cruciform DNA by making single-stranded nicks across the HJ at symmetrical positions within the homologous arms, yielding a 5'-phosphate and a 3'-hydroxyl group; requires a central core of homology in the junction. The consensus cleavage sequence is 5'-(A/T)TT(C/G)-3'. Cleavage occurs on the 3'-side of the TT dinucleotide at the point of strand exchange. HJ branch migration catalyzed by RuvA-RuvB allows RuvC to scan DNA until it finds its consensus sequence, where it cleaves and resolves the cruciform DNA.</text>
</comment>
<comment type="catalytic activity">
    <reaction evidence="1">
        <text>Endonucleolytic cleavage at a junction such as a reciprocal single-stranded crossover between two homologous DNA duplexes (Holliday junction).</text>
        <dbReference type="EC" id="3.1.21.10"/>
    </reaction>
</comment>
<comment type="cofactor">
    <cofactor evidence="1">
        <name>Mg(2+)</name>
        <dbReference type="ChEBI" id="CHEBI:18420"/>
    </cofactor>
    <text evidence="1">Binds 2 Mg(2+) ion per subunit.</text>
</comment>
<comment type="subunit">
    <text evidence="1">Homodimer which binds Holliday junction (HJ) DNA. The HJ becomes 2-fold symmetrical on binding to RuvC with unstacked arms; it has a different conformation from HJ DNA in complex with RuvA. In the full resolvosome a probable DNA-RuvA(4)-RuvB(12)-RuvC(2) complex forms which resolves the HJ.</text>
</comment>
<comment type="subcellular location">
    <subcellularLocation>
        <location evidence="1">Cytoplasm</location>
    </subcellularLocation>
</comment>
<comment type="similarity">
    <text evidence="1">Belongs to the RuvC family.</text>
</comment>
<protein>
    <recommendedName>
        <fullName evidence="1">Crossover junction endodeoxyribonuclease RuvC</fullName>
        <ecNumber evidence="1">3.1.21.10</ecNumber>
    </recommendedName>
    <alternativeName>
        <fullName evidence="1">Holliday junction nuclease RuvC</fullName>
    </alternativeName>
    <alternativeName>
        <fullName evidence="1">Holliday junction resolvase RuvC</fullName>
    </alternativeName>
</protein>
<reference key="1">
    <citation type="submission" date="2006-10" db="EMBL/GenBank/DDBJ databases">
        <title>Complete sequence of chromosome of Pelobacter propionicus DSM 2379.</title>
        <authorList>
            <consortium name="US DOE Joint Genome Institute"/>
            <person name="Copeland A."/>
            <person name="Lucas S."/>
            <person name="Lapidus A."/>
            <person name="Barry K."/>
            <person name="Detter J.C."/>
            <person name="Glavina del Rio T."/>
            <person name="Hammon N."/>
            <person name="Israni S."/>
            <person name="Dalin E."/>
            <person name="Tice H."/>
            <person name="Pitluck S."/>
            <person name="Saunders E."/>
            <person name="Brettin T."/>
            <person name="Bruce D."/>
            <person name="Han C."/>
            <person name="Tapia R."/>
            <person name="Schmutz J."/>
            <person name="Larimer F."/>
            <person name="Land M."/>
            <person name="Hauser L."/>
            <person name="Kyrpides N."/>
            <person name="Kim E."/>
            <person name="Lovley D."/>
            <person name="Richardson P."/>
        </authorList>
    </citation>
    <scope>NUCLEOTIDE SEQUENCE [LARGE SCALE GENOMIC DNA]</scope>
    <source>
        <strain>DSM 2379 / NBRC 103807 / OttBd1</strain>
    </source>
</reference>
<organism>
    <name type="scientific">Pelobacter propionicus (strain DSM 2379 / NBRC 103807 / OttBd1)</name>
    <dbReference type="NCBI Taxonomy" id="338966"/>
    <lineage>
        <taxon>Bacteria</taxon>
        <taxon>Pseudomonadati</taxon>
        <taxon>Thermodesulfobacteriota</taxon>
        <taxon>Desulfuromonadia</taxon>
        <taxon>Desulfuromonadales</taxon>
        <taxon>Desulfuromonadaceae</taxon>
        <taxon>Pelobacter</taxon>
    </lineage>
</organism>
<keyword id="KW-0963">Cytoplasm</keyword>
<keyword id="KW-0227">DNA damage</keyword>
<keyword id="KW-0233">DNA recombination</keyword>
<keyword id="KW-0234">DNA repair</keyword>
<keyword id="KW-0238">DNA-binding</keyword>
<keyword id="KW-0255">Endonuclease</keyword>
<keyword id="KW-0378">Hydrolase</keyword>
<keyword id="KW-0460">Magnesium</keyword>
<keyword id="KW-0479">Metal-binding</keyword>
<keyword id="KW-0540">Nuclease</keyword>
<keyword id="KW-1185">Reference proteome</keyword>
<accession>A1ASF5</accession>
<name>RUVC_PELPD</name>
<sequence length="176" mass="18585">MRVLGIDPGSRITGYGIVEQAGSRLIHVDNGAIFTDSALDFPGRLKSIFDGLTTVIAEYEPDEVAVENVFLSNNAQSALKLGQARGAAIVAAVHAGLPVAEYTALQVKQAVVGRGKAAKEQVQKMLTALLSLPEVAQADASDALAVAVCHLHSHHLVRTSASAVPHRATSWRNFKP</sequence>
<dbReference type="EC" id="3.1.21.10" evidence="1"/>
<dbReference type="EMBL" id="CP000482">
    <property type="protein sequence ID" value="ABL00276.1"/>
    <property type="molecule type" value="Genomic_DNA"/>
</dbReference>
<dbReference type="RefSeq" id="WP_011736528.1">
    <property type="nucleotide sequence ID" value="NC_008609.1"/>
</dbReference>
<dbReference type="SMR" id="A1ASF5"/>
<dbReference type="STRING" id="338966.Ppro_2672"/>
<dbReference type="KEGG" id="ppd:Ppro_2672"/>
<dbReference type="eggNOG" id="COG0817">
    <property type="taxonomic scope" value="Bacteria"/>
</dbReference>
<dbReference type="HOGENOM" id="CLU_091257_3_1_7"/>
<dbReference type="OrthoDB" id="9805499at2"/>
<dbReference type="Proteomes" id="UP000006732">
    <property type="component" value="Chromosome"/>
</dbReference>
<dbReference type="GO" id="GO:0005737">
    <property type="term" value="C:cytoplasm"/>
    <property type="evidence" value="ECO:0007669"/>
    <property type="project" value="UniProtKB-SubCell"/>
</dbReference>
<dbReference type="GO" id="GO:0048476">
    <property type="term" value="C:Holliday junction resolvase complex"/>
    <property type="evidence" value="ECO:0007669"/>
    <property type="project" value="UniProtKB-UniRule"/>
</dbReference>
<dbReference type="GO" id="GO:0008821">
    <property type="term" value="F:crossover junction DNA endonuclease activity"/>
    <property type="evidence" value="ECO:0007669"/>
    <property type="project" value="UniProtKB-UniRule"/>
</dbReference>
<dbReference type="GO" id="GO:0003677">
    <property type="term" value="F:DNA binding"/>
    <property type="evidence" value="ECO:0007669"/>
    <property type="project" value="UniProtKB-KW"/>
</dbReference>
<dbReference type="GO" id="GO:0000287">
    <property type="term" value="F:magnesium ion binding"/>
    <property type="evidence" value="ECO:0007669"/>
    <property type="project" value="UniProtKB-UniRule"/>
</dbReference>
<dbReference type="GO" id="GO:0006310">
    <property type="term" value="P:DNA recombination"/>
    <property type="evidence" value="ECO:0007669"/>
    <property type="project" value="UniProtKB-UniRule"/>
</dbReference>
<dbReference type="GO" id="GO:0006281">
    <property type="term" value="P:DNA repair"/>
    <property type="evidence" value="ECO:0007669"/>
    <property type="project" value="UniProtKB-UniRule"/>
</dbReference>
<dbReference type="CDD" id="cd16962">
    <property type="entry name" value="RuvC"/>
    <property type="match status" value="1"/>
</dbReference>
<dbReference type="FunFam" id="3.30.420.10:FF:000002">
    <property type="entry name" value="Crossover junction endodeoxyribonuclease RuvC"/>
    <property type="match status" value="1"/>
</dbReference>
<dbReference type="Gene3D" id="3.30.420.10">
    <property type="entry name" value="Ribonuclease H-like superfamily/Ribonuclease H"/>
    <property type="match status" value="1"/>
</dbReference>
<dbReference type="HAMAP" id="MF_00034">
    <property type="entry name" value="RuvC"/>
    <property type="match status" value="1"/>
</dbReference>
<dbReference type="InterPro" id="IPR012337">
    <property type="entry name" value="RNaseH-like_sf"/>
</dbReference>
<dbReference type="InterPro" id="IPR036397">
    <property type="entry name" value="RNaseH_sf"/>
</dbReference>
<dbReference type="InterPro" id="IPR020563">
    <property type="entry name" value="X-over_junc_endoDNase_Mg_BS"/>
</dbReference>
<dbReference type="InterPro" id="IPR002176">
    <property type="entry name" value="X-over_junc_endoDNase_RuvC"/>
</dbReference>
<dbReference type="NCBIfam" id="NF000711">
    <property type="entry name" value="PRK00039.2-1"/>
    <property type="match status" value="1"/>
</dbReference>
<dbReference type="NCBIfam" id="TIGR00228">
    <property type="entry name" value="ruvC"/>
    <property type="match status" value="1"/>
</dbReference>
<dbReference type="PANTHER" id="PTHR30194">
    <property type="entry name" value="CROSSOVER JUNCTION ENDODEOXYRIBONUCLEASE RUVC"/>
    <property type="match status" value="1"/>
</dbReference>
<dbReference type="PANTHER" id="PTHR30194:SF3">
    <property type="entry name" value="CROSSOVER JUNCTION ENDODEOXYRIBONUCLEASE RUVC"/>
    <property type="match status" value="1"/>
</dbReference>
<dbReference type="Pfam" id="PF02075">
    <property type="entry name" value="RuvC"/>
    <property type="match status" value="1"/>
</dbReference>
<dbReference type="PRINTS" id="PR00696">
    <property type="entry name" value="RSOLVASERUVC"/>
</dbReference>
<dbReference type="SUPFAM" id="SSF53098">
    <property type="entry name" value="Ribonuclease H-like"/>
    <property type="match status" value="1"/>
</dbReference>
<dbReference type="PROSITE" id="PS01321">
    <property type="entry name" value="RUVC"/>
    <property type="match status" value="1"/>
</dbReference>
<proteinExistence type="inferred from homology"/>
<feature type="chain" id="PRO_1000002789" description="Crossover junction endodeoxyribonuclease RuvC">
    <location>
        <begin position="1"/>
        <end position="176"/>
    </location>
</feature>
<feature type="active site" evidence="1">
    <location>
        <position position="7"/>
    </location>
</feature>
<feature type="active site" evidence="1">
    <location>
        <position position="67"/>
    </location>
</feature>
<feature type="active site" evidence="1">
    <location>
        <position position="139"/>
    </location>
</feature>
<feature type="binding site" evidence="1">
    <location>
        <position position="7"/>
    </location>
    <ligand>
        <name>Mg(2+)</name>
        <dbReference type="ChEBI" id="CHEBI:18420"/>
        <label>1</label>
    </ligand>
</feature>
<feature type="binding site" evidence="1">
    <location>
        <position position="67"/>
    </location>
    <ligand>
        <name>Mg(2+)</name>
        <dbReference type="ChEBI" id="CHEBI:18420"/>
        <label>2</label>
    </ligand>
</feature>
<feature type="binding site" evidence="1">
    <location>
        <position position="139"/>
    </location>
    <ligand>
        <name>Mg(2+)</name>
        <dbReference type="ChEBI" id="CHEBI:18420"/>
        <label>1</label>
    </ligand>
</feature>
<evidence type="ECO:0000255" key="1">
    <source>
        <dbReference type="HAMAP-Rule" id="MF_00034"/>
    </source>
</evidence>